<organism>
    <name type="scientific">Burkholderia thailandensis (strain ATCC 700388 / DSM 13276 / CCUG 48851 / CIP 106301 / E264)</name>
    <dbReference type="NCBI Taxonomy" id="271848"/>
    <lineage>
        <taxon>Bacteria</taxon>
        <taxon>Pseudomonadati</taxon>
        <taxon>Pseudomonadota</taxon>
        <taxon>Betaproteobacteria</taxon>
        <taxon>Burkholderiales</taxon>
        <taxon>Burkholderiaceae</taxon>
        <taxon>Burkholderia</taxon>
        <taxon>pseudomallei group</taxon>
    </lineage>
</organism>
<accession>Q2SY01</accession>
<keyword id="KW-0687">Ribonucleoprotein</keyword>
<keyword id="KW-0689">Ribosomal protein</keyword>
<gene>
    <name evidence="1" type="primary">rpsP</name>
    <name type="ordered locus">BTH_I1661</name>
</gene>
<comment type="similarity">
    <text evidence="1">Belongs to the bacterial ribosomal protein bS16 family.</text>
</comment>
<sequence length="84" mass="9459">MVIIRLARGGSKKRPFYNIVATDSRNRRDGRFIERVGFYNPVATKGEALRIAQDRLTYWQGVGAQLSPTVERLVKQAQKAQPAA</sequence>
<evidence type="ECO:0000255" key="1">
    <source>
        <dbReference type="HAMAP-Rule" id="MF_00385"/>
    </source>
</evidence>
<evidence type="ECO:0000305" key="2"/>
<dbReference type="EMBL" id="CP000086">
    <property type="protein sequence ID" value="ABC36315.1"/>
    <property type="molecule type" value="Genomic_DNA"/>
</dbReference>
<dbReference type="RefSeq" id="WP_004189402.1">
    <property type="nucleotide sequence ID" value="NZ_CP008785.1"/>
</dbReference>
<dbReference type="SMR" id="Q2SY01"/>
<dbReference type="GeneID" id="93061079"/>
<dbReference type="KEGG" id="bte:BTH_I1661"/>
<dbReference type="HOGENOM" id="CLU_100590_5_1_4"/>
<dbReference type="Proteomes" id="UP000001930">
    <property type="component" value="Chromosome I"/>
</dbReference>
<dbReference type="GO" id="GO:0005737">
    <property type="term" value="C:cytoplasm"/>
    <property type="evidence" value="ECO:0007669"/>
    <property type="project" value="UniProtKB-ARBA"/>
</dbReference>
<dbReference type="GO" id="GO:0015935">
    <property type="term" value="C:small ribosomal subunit"/>
    <property type="evidence" value="ECO:0007669"/>
    <property type="project" value="TreeGrafter"/>
</dbReference>
<dbReference type="GO" id="GO:0003735">
    <property type="term" value="F:structural constituent of ribosome"/>
    <property type="evidence" value="ECO:0007669"/>
    <property type="project" value="InterPro"/>
</dbReference>
<dbReference type="GO" id="GO:0006412">
    <property type="term" value="P:translation"/>
    <property type="evidence" value="ECO:0007669"/>
    <property type="project" value="UniProtKB-UniRule"/>
</dbReference>
<dbReference type="Gene3D" id="3.30.1320.10">
    <property type="match status" value="1"/>
</dbReference>
<dbReference type="HAMAP" id="MF_00385">
    <property type="entry name" value="Ribosomal_bS16"/>
    <property type="match status" value="1"/>
</dbReference>
<dbReference type="InterPro" id="IPR000307">
    <property type="entry name" value="Ribosomal_bS16"/>
</dbReference>
<dbReference type="InterPro" id="IPR023803">
    <property type="entry name" value="Ribosomal_bS16_dom_sf"/>
</dbReference>
<dbReference type="NCBIfam" id="TIGR00002">
    <property type="entry name" value="S16"/>
    <property type="match status" value="1"/>
</dbReference>
<dbReference type="PANTHER" id="PTHR12919">
    <property type="entry name" value="30S RIBOSOMAL PROTEIN S16"/>
    <property type="match status" value="1"/>
</dbReference>
<dbReference type="PANTHER" id="PTHR12919:SF20">
    <property type="entry name" value="SMALL RIBOSOMAL SUBUNIT PROTEIN BS16M"/>
    <property type="match status" value="1"/>
</dbReference>
<dbReference type="Pfam" id="PF00886">
    <property type="entry name" value="Ribosomal_S16"/>
    <property type="match status" value="1"/>
</dbReference>
<dbReference type="SUPFAM" id="SSF54565">
    <property type="entry name" value="Ribosomal protein S16"/>
    <property type="match status" value="1"/>
</dbReference>
<proteinExistence type="inferred from homology"/>
<feature type="chain" id="PRO_0000243789" description="Small ribosomal subunit protein bS16">
    <location>
        <begin position="1"/>
        <end position="84"/>
    </location>
</feature>
<reference key="1">
    <citation type="journal article" date="2005" name="BMC Genomics">
        <title>Bacterial genome adaptation to niches: divergence of the potential virulence genes in three Burkholderia species of different survival strategies.</title>
        <authorList>
            <person name="Kim H.S."/>
            <person name="Schell M.A."/>
            <person name="Yu Y."/>
            <person name="Ulrich R.L."/>
            <person name="Sarria S.H."/>
            <person name="Nierman W.C."/>
            <person name="DeShazer D."/>
        </authorList>
    </citation>
    <scope>NUCLEOTIDE SEQUENCE [LARGE SCALE GENOMIC DNA]</scope>
    <source>
        <strain>ATCC 700388 / DSM 13276 / CCUG 48851 / CIP 106301 / E264</strain>
    </source>
</reference>
<name>RS16_BURTA</name>
<protein>
    <recommendedName>
        <fullName evidence="1">Small ribosomal subunit protein bS16</fullName>
    </recommendedName>
    <alternativeName>
        <fullName evidence="2">30S ribosomal protein S16</fullName>
    </alternativeName>
</protein>